<sequence>MPRSLKKGPFVDDHLLKKVDVQNSKGTKHVIKTWSRRSTVIPDMLGHTIAVHDGRKHVPVFITEGMVGHKLGEFAPTRTFRGHVKEDRRSRRG</sequence>
<organism>
    <name type="scientific">Frankia alni (strain DSM 45986 / CECT 9034 / ACN14a)</name>
    <dbReference type="NCBI Taxonomy" id="326424"/>
    <lineage>
        <taxon>Bacteria</taxon>
        <taxon>Bacillati</taxon>
        <taxon>Actinomycetota</taxon>
        <taxon>Actinomycetes</taxon>
        <taxon>Frankiales</taxon>
        <taxon>Frankiaceae</taxon>
        <taxon>Frankia</taxon>
    </lineage>
</organism>
<evidence type="ECO:0000255" key="1">
    <source>
        <dbReference type="HAMAP-Rule" id="MF_00531"/>
    </source>
</evidence>
<evidence type="ECO:0000305" key="2"/>
<keyword id="KW-1185">Reference proteome</keyword>
<keyword id="KW-0687">Ribonucleoprotein</keyword>
<keyword id="KW-0689">Ribosomal protein</keyword>
<keyword id="KW-0694">RNA-binding</keyword>
<keyword id="KW-0699">rRNA-binding</keyword>
<proteinExistence type="inferred from homology"/>
<gene>
    <name evidence="1" type="primary">rpsS</name>
    <name type="ordered locus">FRAAL1085</name>
</gene>
<dbReference type="EMBL" id="CT573213">
    <property type="protein sequence ID" value="CAJ59750.1"/>
    <property type="molecule type" value="Genomic_DNA"/>
</dbReference>
<dbReference type="RefSeq" id="WP_009740524.1">
    <property type="nucleotide sequence ID" value="NC_008278.1"/>
</dbReference>
<dbReference type="SMR" id="Q0RRR7"/>
<dbReference type="STRING" id="326424.FRAAL1085"/>
<dbReference type="KEGG" id="fal:FRAAL1085"/>
<dbReference type="eggNOG" id="COG0185">
    <property type="taxonomic scope" value="Bacteria"/>
</dbReference>
<dbReference type="HOGENOM" id="CLU_144911_0_1_11"/>
<dbReference type="OrthoDB" id="9797833at2"/>
<dbReference type="Proteomes" id="UP000000657">
    <property type="component" value="Chromosome"/>
</dbReference>
<dbReference type="GO" id="GO:0005737">
    <property type="term" value="C:cytoplasm"/>
    <property type="evidence" value="ECO:0007669"/>
    <property type="project" value="UniProtKB-ARBA"/>
</dbReference>
<dbReference type="GO" id="GO:0015935">
    <property type="term" value="C:small ribosomal subunit"/>
    <property type="evidence" value="ECO:0007669"/>
    <property type="project" value="InterPro"/>
</dbReference>
<dbReference type="GO" id="GO:0019843">
    <property type="term" value="F:rRNA binding"/>
    <property type="evidence" value="ECO:0007669"/>
    <property type="project" value="UniProtKB-UniRule"/>
</dbReference>
<dbReference type="GO" id="GO:0003735">
    <property type="term" value="F:structural constituent of ribosome"/>
    <property type="evidence" value="ECO:0007669"/>
    <property type="project" value="InterPro"/>
</dbReference>
<dbReference type="GO" id="GO:0000028">
    <property type="term" value="P:ribosomal small subunit assembly"/>
    <property type="evidence" value="ECO:0007669"/>
    <property type="project" value="TreeGrafter"/>
</dbReference>
<dbReference type="GO" id="GO:0006412">
    <property type="term" value="P:translation"/>
    <property type="evidence" value="ECO:0007669"/>
    <property type="project" value="UniProtKB-UniRule"/>
</dbReference>
<dbReference type="FunFam" id="3.30.860.10:FF:000001">
    <property type="entry name" value="30S ribosomal protein S19"/>
    <property type="match status" value="1"/>
</dbReference>
<dbReference type="Gene3D" id="3.30.860.10">
    <property type="entry name" value="30s Ribosomal Protein S19, Chain A"/>
    <property type="match status" value="1"/>
</dbReference>
<dbReference type="HAMAP" id="MF_00531">
    <property type="entry name" value="Ribosomal_uS19"/>
    <property type="match status" value="1"/>
</dbReference>
<dbReference type="InterPro" id="IPR002222">
    <property type="entry name" value="Ribosomal_uS19"/>
</dbReference>
<dbReference type="InterPro" id="IPR005732">
    <property type="entry name" value="Ribosomal_uS19_bac-type"/>
</dbReference>
<dbReference type="InterPro" id="IPR020934">
    <property type="entry name" value="Ribosomal_uS19_CS"/>
</dbReference>
<dbReference type="InterPro" id="IPR023575">
    <property type="entry name" value="Ribosomal_uS19_SF"/>
</dbReference>
<dbReference type="NCBIfam" id="TIGR01050">
    <property type="entry name" value="rpsS_bact"/>
    <property type="match status" value="1"/>
</dbReference>
<dbReference type="PANTHER" id="PTHR11880">
    <property type="entry name" value="RIBOSOMAL PROTEIN S19P FAMILY MEMBER"/>
    <property type="match status" value="1"/>
</dbReference>
<dbReference type="PANTHER" id="PTHR11880:SF8">
    <property type="entry name" value="SMALL RIBOSOMAL SUBUNIT PROTEIN US19M"/>
    <property type="match status" value="1"/>
</dbReference>
<dbReference type="Pfam" id="PF00203">
    <property type="entry name" value="Ribosomal_S19"/>
    <property type="match status" value="1"/>
</dbReference>
<dbReference type="PIRSF" id="PIRSF002144">
    <property type="entry name" value="Ribosomal_S19"/>
    <property type="match status" value="1"/>
</dbReference>
<dbReference type="PRINTS" id="PR00975">
    <property type="entry name" value="RIBOSOMALS19"/>
</dbReference>
<dbReference type="SUPFAM" id="SSF54570">
    <property type="entry name" value="Ribosomal protein S19"/>
    <property type="match status" value="1"/>
</dbReference>
<dbReference type="PROSITE" id="PS00323">
    <property type="entry name" value="RIBOSOMAL_S19"/>
    <property type="match status" value="1"/>
</dbReference>
<comment type="function">
    <text evidence="1">Protein S19 forms a complex with S13 that binds strongly to the 16S ribosomal RNA.</text>
</comment>
<comment type="similarity">
    <text evidence="1">Belongs to the universal ribosomal protein uS19 family.</text>
</comment>
<protein>
    <recommendedName>
        <fullName evidence="1">Small ribosomal subunit protein uS19</fullName>
    </recommendedName>
    <alternativeName>
        <fullName evidence="2">30S ribosomal protein S19</fullName>
    </alternativeName>
</protein>
<feature type="chain" id="PRO_1000051049" description="Small ribosomal subunit protein uS19">
    <location>
        <begin position="1"/>
        <end position="93"/>
    </location>
</feature>
<accession>Q0RRR7</accession>
<name>RS19_FRAAA</name>
<reference key="1">
    <citation type="journal article" date="2007" name="Genome Res.">
        <title>Genome characteristics of facultatively symbiotic Frankia sp. strains reflect host range and host plant biogeography.</title>
        <authorList>
            <person name="Normand P."/>
            <person name="Lapierre P."/>
            <person name="Tisa L.S."/>
            <person name="Gogarten J.P."/>
            <person name="Alloisio N."/>
            <person name="Bagnarol E."/>
            <person name="Bassi C.A."/>
            <person name="Berry A.M."/>
            <person name="Bickhart D.M."/>
            <person name="Choisne N."/>
            <person name="Couloux A."/>
            <person name="Cournoyer B."/>
            <person name="Cruveiller S."/>
            <person name="Daubin V."/>
            <person name="Demange N."/>
            <person name="Francino M.P."/>
            <person name="Goltsman E."/>
            <person name="Huang Y."/>
            <person name="Kopp O.R."/>
            <person name="Labarre L."/>
            <person name="Lapidus A."/>
            <person name="Lavire C."/>
            <person name="Marechal J."/>
            <person name="Martinez M."/>
            <person name="Mastronunzio J.E."/>
            <person name="Mullin B.C."/>
            <person name="Niemann J."/>
            <person name="Pujic P."/>
            <person name="Rawnsley T."/>
            <person name="Rouy Z."/>
            <person name="Schenowitz C."/>
            <person name="Sellstedt A."/>
            <person name="Tavares F."/>
            <person name="Tomkins J.P."/>
            <person name="Vallenet D."/>
            <person name="Valverde C."/>
            <person name="Wall L.G."/>
            <person name="Wang Y."/>
            <person name="Medigue C."/>
            <person name="Benson D.R."/>
        </authorList>
    </citation>
    <scope>NUCLEOTIDE SEQUENCE [LARGE SCALE GENOMIC DNA]</scope>
    <source>
        <strain>DSM 45986 / CECT 9034 / ACN14a</strain>
    </source>
</reference>